<comment type="function">
    <text evidence="2 4 6">The small GTPases Rab are key regulators of intracellular membrane trafficking, from the formation of transport vesicles to their fusion with membranes. Rabs cycle between an inactive GDP-bound form and an active GTP-bound form that is able to recruit to membranes different sets of downstream effectors directly responsible for vesicle formation, movement, tethering and fusion. Required for the localization of ZFYVE1 to lipid droplets and for its function in mediating the formation of endoplasmic reticulum-lipid droplets (ER-LD) contacts. Also required for maintaining endoplasmic reticulum structure (By similarity). Plays a role in apical endocytosis/recycling (By similarity). Plays a key role in eye and brain development and neurodegeneration (PubMed:21473985).</text>
</comment>
<comment type="catalytic activity">
    <reaction evidence="4">
        <text>GTP + H2O = GDP + phosphate + H(+)</text>
        <dbReference type="Rhea" id="RHEA:19669"/>
        <dbReference type="ChEBI" id="CHEBI:15377"/>
        <dbReference type="ChEBI" id="CHEBI:15378"/>
        <dbReference type="ChEBI" id="CHEBI:37565"/>
        <dbReference type="ChEBI" id="CHEBI:43474"/>
        <dbReference type="ChEBI" id="CHEBI:58189"/>
        <dbReference type="EC" id="3.6.5.2"/>
    </reaction>
    <physiologicalReaction direction="left-to-right" evidence="4">
        <dbReference type="Rhea" id="RHEA:19670"/>
    </physiologicalReaction>
</comment>
<comment type="cofactor">
    <cofactor evidence="4">
        <name>Mg(2+)</name>
        <dbReference type="ChEBI" id="CHEBI:18420"/>
    </cofactor>
</comment>
<comment type="activity regulation">
    <text evidence="4">Regulated by guanine nucleotide exchange factors (GEFs) which promote the exchange of bound GDP for free GTP. Regulated by GTPase activating proteins (GAPs) which increase the GTP hydrolysis activity at the ER membrane. Inhibited by GDP dissociation inhibitors (GDIs) which prevent Rab-GDP dissociation.</text>
</comment>
<comment type="subcellular location">
    <subcellularLocation>
        <location evidence="4">Endoplasmic reticulum membrane</location>
    </subcellularLocation>
    <subcellularLocation>
        <location evidence="4">Golgi apparatus</location>
        <location evidence="4">cis-Golgi network membrane</location>
    </subcellularLocation>
    <subcellularLocation>
        <location evidence="4">Lipid droplet</location>
    </subcellularLocation>
    <subcellularLocation>
        <location evidence="2">Apical cell membrane</location>
    </subcellularLocation>
</comment>
<comment type="domain">
    <text evidence="3">Switch 1, switch 2 and the interswitch regions are characteristic of Rab GTPases and mediate the interactions with Rab downstream effectors. The switch regions undergo conformational changes upon nucleotide binding which drive interaction with specific sets of effector proteins, with most effectors only binding to GTP-bound Rab.</text>
</comment>
<comment type="disruption phenotype">
    <text evidence="6">The most common abnormalities observed at 3 days post-fertilization are microphthalmia, microcephaly, pericardial edema, delayed jaw formation, a reduced overall body size, and a general developmental delay. Further characterization revealed that the rab18b morphants have delayed retinal development and abnormal retinal lamination, residual nucleated lens fiber cells, widely open choroid fissure, and microphthalmia at day 3.</text>
</comment>
<comment type="similarity">
    <text evidence="7">Belongs to the small GTPase superfamily. Rab family.</text>
</comment>
<protein>
    <recommendedName>
        <fullName>Ras-related protein Rab-18-B</fullName>
        <ecNumber evidence="4">3.6.5.2</ecNumber>
    </recommendedName>
</protein>
<proteinExistence type="evidence at transcript level"/>
<name>RB18B_DANRE</name>
<keyword id="KW-1003">Cell membrane</keyword>
<keyword id="KW-0217">Developmental protein</keyword>
<keyword id="KW-0256">Endoplasmic reticulum</keyword>
<keyword id="KW-0333">Golgi apparatus</keyword>
<keyword id="KW-0342">GTP-binding</keyword>
<keyword id="KW-0378">Hydrolase</keyword>
<keyword id="KW-0551">Lipid droplet</keyword>
<keyword id="KW-0449">Lipoprotein</keyword>
<keyword id="KW-0460">Magnesium</keyword>
<keyword id="KW-0472">Membrane</keyword>
<keyword id="KW-0479">Metal-binding</keyword>
<keyword id="KW-0488">Methylation</keyword>
<keyword id="KW-0547">Nucleotide-binding</keyword>
<keyword id="KW-0564">Palmitate</keyword>
<keyword id="KW-0636">Prenylation</keyword>
<keyword id="KW-0653">Protein transport</keyword>
<keyword id="KW-1185">Reference proteome</keyword>
<keyword id="KW-0813">Transport</keyword>
<accession>Q6DHC1</accession>
<dbReference type="EC" id="3.6.5.2" evidence="4"/>
<dbReference type="EMBL" id="BC076054">
    <property type="protein sequence ID" value="AAH76054.1"/>
    <property type="molecule type" value="mRNA"/>
</dbReference>
<dbReference type="RefSeq" id="NP_001003449.1">
    <property type="nucleotide sequence ID" value="NM_001003449.1"/>
</dbReference>
<dbReference type="SMR" id="Q6DHC1"/>
<dbReference type="FunCoup" id="Q6DHC1">
    <property type="interactions" value="2298"/>
</dbReference>
<dbReference type="STRING" id="7955.ENSDARP00000133937"/>
<dbReference type="PaxDb" id="7955-ENSDARP00000042736"/>
<dbReference type="Ensembl" id="ENSDART00000158335">
    <property type="protein sequence ID" value="ENSDARP00000133937"/>
    <property type="gene ID" value="ENSDARG00000098344"/>
</dbReference>
<dbReference type="GeneID" id="445055"/>
<dbReference type="KEGG" id="dre:445055"/>
<dbReference type="AGR" id="ZFIN:ZDB-GENE-040801-185"/>
<dbReference type="CTD" id="445055"/>
<dbReference type="ZFIN" id="ZDB-GENE-040801-185">
    <property type="gene designation" value="rab18b"/>
</dbReference>
<dbReference type="eggNOG" id="KOG0080">
    <property type="taxonomic scope" value="Eukaryota"/>
</dbReference>
<dbReference type="HOGENOM" id="CLU_041217_10_7_1"/>
<dbReference type="InParanoid" id="Q6DHC1"/>
<dbReference type="OMA" id="IRYCDDQ"/>
<dbReference type="OrthoDB" id="9989112at2759"/>
<dbReference type="PhylomeDB" id="Q6DHC1"/>
<dbReference type="TreeFam" id="TF313448"/>
<dbReference type="Reactome" id="R-DRE-6798695">
    <property type="pathway name" value="Neutrophil degranulation"/>
</dbReference>
<dbReference type="Reactome" id="R-DRE-8873719">
    <property type="pathway name" value="RAB geranylgeranylation"/>
</dbReference>
<dbReference type="PRO" id="PR:Q6DHC1"/>
<dbReference type="Proteomes" id="UP000000437">
    <property type="component" value="Chromosome 2"/>
</dbReference>
<dbReference type="GO" id="GO:0016324">
    <property type="term" value="C:apical plasma membrane"/>
    <property type="evidence" value="ECO:0007669"/>
    <property type="project" value="UniProtKB-SubCell"/>
</dbReference>
<dbReference type="GO" id="GO:0033106">
    <property type="term" value="C:cis-Golgi network membrane"/>
    <property type="evidence" value="ECO:0000250"/>
    <property type="project" value="UniProtKB"/>
</dbReference>
<dbReference type="GO" id="GO:0012505">
    <property type="term" value="C:endomembrane system"/>
    <property type="evidence" value="ECO:0000318"/>
    <property type="project" value="GO_Central"/>
</dbReference>
<dbReference type="GO" id="GO:0005789">
    <property type="term" value="C:endoplasmic reticulum membrane"/>
    <property type="evidence" value="ECO:0000250"/>
    <property type="project" value="UniProtKB"/>
</dbReference>
<dbReference type="GO" id="GO:0005794">
    <property type="term" value="C:Golgi apparatus"/>
    <property type="evidence" value="ECO:0000318"/>
    <property type="project" value="GO_Central"/>
</dbReference>
<dbReference type="GO" id="GO:0005811">
    <property type="term" value="C:lipid droplet"/>
    <property type="evidence" value="ECO:0000250"/>
    <property type="project" value="UniProtKB"/>
</dbReference>
<dbReference type="GO" id="GO:0005525">
    <property type="term" value="F:GTP binding"/>
    <property type="evidence" value="ECO:0007669"/>
    <property type="project" value="UniProtKB-KW"/>
</dbReference>
<dbReference type="GO" id="GO:0003924">
    <property type="term" value="F:GTPase activity"/>
    <property type="evidence" value="ECO:0000250"/>
    <property type="project" value="UniProtKB"/>
</dbReference>
<dbReference type="GO" id="GO:0007420">
    <property type="term" value="P:brain development"/>
    <property type="evidence" value="ECO:0000315"/>
    <property type="project" value="UniProtKB"/>
</dbReference>
<dbReference type="GO" id="GO:0043009">
    <property type="term" value="P:chordate embryonic development"/>
    <property type="evidence" value="ECO:0000315"/>
    <property type="project" value="ZFIN"/>
</dbReference>
<dbReference type="GO" id="GO:0001654">
    <property type="term" value="P:eye development"/>
    <property type="evidence" value="ECO:0000315"/>
    <property type="project" value="UniProtKB"/>
</dbReference>
<dbReference type="GO" id="GO:0006886">
    <property type="term" value="P:intracellular protein transport"/>
    <property type="evidence" value="ECO:0000318"/>
    <property type="project" value="GO_Central"/>
</dbReference>
<dbReference type="GO" id="GO:0034389">
    <property type="term" value="P:lipid droplet organization"/>
    <property type="evidence" value="ECO:0000318"/>
    <property type="project" value="GO_Central"/>
</dbReference>
<dbReference type="CDD" id="cd01863">
    <property type="entry name" value="Rab18"/>
    <property type="match status" value="1"/>
</dbReference>
<dbReference type="FunFam" id="3.40.50.300:FF:000430">
    <property type="entry name" value="Probable Ras-related protein Rab-18"/>
    <property type="match status" value="1"/>
</dbReference>
<dbReference type="Gene3D" id="3.40.50.300">
    <property type="entry name" value="P-loop containing nucleotide triphosphate hydrolases"/>
    <property type="match status" value="1"/>
</dbReference>
<dbReference type="InterPro" id="IPR027417">
    <property type="entry name" value="P-loop_NTPase"/>
</dbReference>
<dbReference type="InterPro" id="IPR050227">
    <property type="entry name" value="Rab"/>
</dbReference>
<dbReference type="InterPro" id="IPR025662">
    <property type="entry name" value="Sigma_54_int_dom_ATP-bd_1"/>
</dbReference>
<dbReference type="InterPro" id="IPR005225">
    <property type="entry name" value="Small_GTP-bd"/>
</dbReference>
<dbReference type="InterPro" id="IPR001806">
    <property type="entry name" value="Small_GTPase"/>
</dbReference>
<dbReference type="NCBIfam" id="TIGR00231">
    <property type="entry name" value="small_GTP"/>
    <property type="match status" value="1"/>
</dbReference>
<dbReference type="PANTHER" id="PTHR47977">
    <property type="entry name" value="RAS-RELATED PROTEIN RAB"/>
    <property type="match status" value="1"/>
</dbReference>
<dbReference type="Pfam" id="PF00071">
    <property type="entry name" value="Ras"/>
    <property type="match status" value="1"/>
</dbReference>
<dbReference type="PRINTS" id="PR00449">
    <property type="entry name" value="RASTRNSFRMNG"/>
</dbReference>
<dbReference type="SMART" id="SM00177">
    <property type="entry name" value="ARF"/>
    <property type="match status" value="1"/>
</dbReference>
<dbReference type="SMART" id="SM00175">
    <property type="entry name" value="RAB"/>
    <property type="match status" value="1"/>
</dbReference>
<dbReference type="SMART" id="SM00176">
    <property type="entry name" value="RAN"/>
    <property type="match status" value="1"/>
</dbReference>
<dbReference type="SMART" id="SM00173">
    <property type="entry name" value="RAS"/>
    <property type="match status" value="1"/>
</dbReference>
<dbReference type="SMART" id="SM00174">
    <property type="entry name" value="RHO"/>
    <property type="match status" value="1"/>
</dbReference>
<dbReference type="SUPFAM" id="SSF52540">
    <property type="entry name" value="P-loop containing nucleoside triphosphate hydrolases"/>
    <property type="match status" value="1"/>
</dbReference>
<dbReference type="PROSITE" id="PS51419">
    <property type="entry name" value="RAB"/>
    <property type="match status" value="1"/>
</dbReference>
<sequence length="205" mass="23013">MDDDVLTTLKILIIGESGVGKSSLLLRFTDDTFDPELAATIGVDFKVKTIAIDGNRAKLAIWDTAGQERFRTLTPSYYRGAQGVILVYDVTKRDTFTKLENWLNELETYCTRNDLVKMLVGNKIDKDNREVDRNEGLKFARKHSMLFIEASAKTRDGVQCAFEELVEKILQTPGLWESSIQNHGVQLSDNEPQRQGACGGYCSLV</sequence>
<reference key="1">
    <citation type="submission" date="2004-07" db="EMBL/GenBank/DDBJ databases">
        <authorList>
            <consortium name="NIH - Zebrafish Gene Collection (ZGC) project"/>
        </authorList>
    </citation>
    <scope>NUCLEOTIDE SEQUENCE [LARGE SCALE MRNA]</scope>
</reference>
<reference key="2">
    <citation type="journal article" date="2011" name="Am. J. Hum. Genet.">
        <title>Loss-of-function mutations in RAB18 cause Warburg micro syndrome.</title>
        <authorList>
            <person name="Bem D."/>
            <person name="Yoshimura S."/>
            <person name="Nunes-Bastos R."/>
            <person name="Bond F.C."/>
            <person name="Kurian M.A."/>
            <person name="Rahman F."/>
            <person name="Handley M.T."/>
            <person name="Hadzhiev Y."/>
            <person name="Masood I."/>
            <person name="Straatman-Iwanowska A.A."/>
            <person name="Cullinane A.R."/>
            <person name="McNeill A."/>
            <person name="Pasha S.S."/>
            <person name="Kirby G.A."/>
            <person name="Foster K."/>
            <person name="Ahmed Z."/>
            <person name="Morton J.E."/>
            <person name="Williams D."/>
            <person name="Graham J.M."/>
            <person name="Dobyns W.B."/>
            <person name="Burglen L."/>
            <person name="Ainsworth J.R."/>
            <person name="Gissen P."/>
            <person name="Muller F."/>
            <person name="Maher E.R."/>
            <person name="Barr F.A."/>
            <person name="Aligianis I.A."/>
        </authorList>
    </citation>
    <scope>FUNCTION</scope>
    <scope>DISRUPTION PHENOTYPE</scope>
</reference>
<gene>
    <name type="primary">rab18b</name>
    <name type="synonym">rab18</name>
    <name type="ORF">zgc:92523</name>
</gene>
<feature type="chain" id="PRO_0000121198" description="Ras-related protein Rab-18-B">
    <location>
        <begin position="1"/>
        <end position="202"/>
    </location>
</feature>
<feature type="propeptide" id="PRO_0000370820" description="Removed in mature form" evidence="5">
    <location>
        <begin position="203"/>
        <end position="205"/>
    </location>
</feature>
<feature type="short sequence motif" description="Switch 1" evidence="3">
    <location>
        <begin position="31"/>
        <end position="45"/>
    </location>
</feature>
<feature type="short sequence motif" description="Switch 2" evidence="3">
    <location>
        <begin position="63"/>
        <end position="80"/>
    </location>
</feature>
<feature type="binding site" evidence="4">
    <location>
        <position position="17"/>
    </location>
    <ligand>
        <name>GTP</name>
        <dbReference type="ChEBI" id="CHEBI:37565"/>
    </ligand>
</feature>
<feature type="binding site" evidence="4">
    <location>
        <position position="20"/>
    </location>
    <ligand>
        <name>GTP</name>
        <dbReference type="ChEBI" id="CHEBI:37565"/>
    </ligand>
</feature>
<feature type="binding site" evidence="4">
    <location>
        <position position="21"/>
    </location>
    <ligand>
        <name>GTP</name>
        <dbReference type="ChEBI" id="CHEBI:37565"/>
    </ligand>
</feature>
<feature type="binding site" evidence="4">
    <location>
        <position position="22"/>
    </location>
    <ligand>
        <name>GTP</name>
        <dbReference type="ChEBI" id="CHEBI:37565"/>
    </ligand>
</feature>
<feature type="binding site" evidence="4">
    <location>
        <position position="22"/>
    </location>
    <ligand>
        <name>Mg(2+)</name>
        <dbReference type="ChEBI" id="CHEBI:18420"/>
    </ligand>
</feature>
<feature type="binding site" evidence="4">
    <location>
        <position position="23"/>
    </location>
    <ligand>
        <name>GTP</name>
        <dbReference type="ChEBI" id="CHEBI:37565"/>
    </ligand>
</feature>
<feature type="binding site" evidence="4">
    <location>
        <position position="34"/>
    </location>
    <ligand>
        <name>GTP</name>
        <dbReference type="ChEBI" id="CHEBI:37565"/>
    </ligand>
</feature>
<feature type="binding site" evidence="4">
    <location>
        <position position="35"/>
    </location>
    <ligand>
        <name>GTP</name>
        <dbReference type="ChEBI" id="CHEBI:37565"/>
    </ligand>
</feature>
<feature type="binding site" evidence="4">
    <location>
        <position position="40"/>
    </location>
    <ligand>
        <name>GTP</name>
        <dbReference type="ChEBI" id="CHEBI:37565"/>
    </ligand>
</feature>
<feature type="binding site" evidence="4">
    <location>
        <position position="40"/>
    </location>
    <ligand>
        <name>Mg(2+)</name>
        <dbReference type="ChEBI" id="CHEBI:18420"/>
    </ligand>
</feature>
<feature type="binding site" evidence="4">
    <location>
        <position position="66"/>
    </location>
    <ligand>
        <name>GTP</name>
        <dbReference type="ChEBI" id="CHEBI:37565"/>
    </ligand>
</feature>
<feature type="binding site" evidence="4">
    <location>
        <position position="123"/>
    </location>
    <ligand>
        <name>GTP</name>
        <dbReference type="ChEBI" id="CHEBI:37565"/>
    </ligand>
</feature>
<feature type="binding site" evidence="4">
    <location>
        <position position="125"/>
    </location>
    <ligand>
        <name>GTP</name>
        <dbReference type="ChEBI" id="CHEBI:37565"/>
    </ligand>
</feature>
<feature type="binding site" evidence="4">
    <location>
        <position position="152"/>
    </location>
    <ligand>
        <name>GTP</name>
        <dbReference type="ChEBI" id="CHEBI:37565"/>
    </ligand>
</feature>
<feature type="modified residue" description="Cysteine methyl ester" evidence="5">
    <location>
        <position position="202"/>
    </location>
</feature>
<feature type="lipid moiety-binding region" description="S-palmitoyl cysteine" evidence="5">
    <location>
        <position position="198"/>
    </location>
</feature>
<feature type="lipid moiety-binding region" description="S-geranylgeranyl cysteine" evidence="1">
    <location>
        <position position="202"/>
    </location>
</feature>
<evidence type="ECO:0000250" key="1"/>
<evidence type="ECO:0000250" key="2">
    <source>
        <dbReference type="UniProtKB" id="P35293"/>
    </source>
</evidence>
<evidence type="ECO:0000250" key="3">
    <source>
        <dbReference type="UniProtKB" id="P62820"/>
    </source>
</evidence>
<evidence type="ECO:0000250" key="4">
    <source>
        <dbReference type="UniProtKB" id="Q9NP72"/>
    </source>
</evidence>
<evidence type="ECO:0000255" key="5"/>
<evidence type="ECO:0000269" key="6">
    <source>
    </source>
</evidence>
<evidence type="ECO:0000305" key="7"/>
<organism>
    <name type="scientific">Danio rerio</name>
    <name type="common">Zebrafish</name>
    <name type="synonym">Brachydanio rerio</name>
    <dbReference type="NCBI Taxonomy" id="7955"/>
    <lineage>
        <taxon>Eukaryota</taxon>
        <taxon>Metazoa</taxon>
        <taxon>Chordata</taxon>
        <taxon>Craniata</taxon>
        <taxon>Vertebrata</taxon>
        <taxon>Euteleostomi</taxon>
        <taxon>Actinopterygii</taxon>
        <taxon>Neopterygii</taxon>
        <taxon>Teleostei</taxon>
        <taxon>Ostariophysi</taxon>
        <taxon>Cypriniformes</taxon>
        <taxon>Danionidae</taxon>
        <taxon>Danioninae</taxon>
        <taxon>Danio</taxon>
    </lineage>
</organism>